<sequence>MAQQSQRPISNRHISLLNRNGLILLLLLALFVILGVFLPLTKSSLFMFPNTTSSSLSPSSSLSVSDWRDYSLAQAVKFVAKNETVIVCAVSYPFLPFLNNWLISISRQKHQEKVLVIAEDYATLYKVNEKWPGHAVLIPPALDPQSAHKFGSQGFFNLTSRRPQHLLNILELGYNVMYNDVDMVWLQDPFDYLQGSYDAYFMDDMIAIKPLNHSHDLPPLSRSGVTYVCSCMIFLRSTDGGKLLMKTWVEEIQAQPWNNTQAKKPHDQPAFNRALHKTANQVKVYLLPQSAFPSGGLYFRNETWVNETRGKHVIVHNNYIIGYDKKMKRFQDFSLWLVDDHALESPLGKLEIYQEQNTTTEGKNLTKIVRKQRKNRGKKHKLP</sequence>
<organism>
    <name type="scientific">Arabidopsis thaliana</name>
    <name type="common">Mouse-ear cress</name>
    <dbReference type="NCBI Taxonomy" id="3702"/>
    <lineage>
        <taxon>Eukaryota</taxon>
        <taxon>Viridiplantae</taxon>
        <taxon>Streptophyta</taxon>
        <taxon>Embryophyta</taxon>
        <taxon>Tracheophyta</taxon>
        <taxon>Spermatophyta</taxon>
        <taxon>Magnoliopsida</taxon>
        <taxon>eudicotyledons</taxon>
        <taxon>Gunneridae</taxon>
        <taxon>Pentapetalae</taxon>
        <taxon>rosids</taxon>
        <taxon>malvids</taxon>
        <taxon>Brassicales</taxon>
        <taxon>Brassicaceae</taxon>
        <taxon>Camelineae</taxon>
        <taxon>Arabidopsis</taxon>
    </lineage>
</organism>
<reference key="1">
    <citation type="journal article" date="2000" name="Nature">
        <title>Sequence and analysis of chromosome 1 of the plant Arabidopsis thaliana.</title>
        <authorList>
            <person name="Theologis A."/>
            <person name="Ecker J.R."/>
            <person name="Palm C.J."/>
            <person name="Federspiel N.A."/>
            <person name="Kaul S."/>
            <person name="White O."/>
            <person name="Alonso J."/>
            <person name="Altafi H."/>
            <person name="Araujo R."/>
            <person name="Bowman C.L."/>
            <person name="Brooks S.Y."/>
            <person name="Buehler E."/>
            <person name="Chan A."/>
            <person name="Chao Q."/>
            <person name="Chen H."/>
            <person name="Cheuk R.F."/>
            <person name="Chin C.W."/>
            <person name="Chung M.K."/>
            <person name="Conn L."/>
            <person name="Conway A.B."/>
            <person name="Conway A.R."/>
            <person name="Creasy T.H."/>
            <person name="Dewar K."/>
            <person name="Dunn P."/>
            <person name="Etgu P."/>
            <person name="Feldblyum T.V."/>
            <person name="Feng J.-D."/>
            <person name="Fong B."/>
            <person name="Fujii C.Y."/>
            <person name="Gill J.E."/>
            <person name="Goldsmith A.D."/>
            <person name="Haas B."/>
            <person name="Hansen N.F."/>
            <person name="Hughes B."/>
            <person name="Huizar L."/>
            <person name="Hunter J.L."/>
            <person name="Jenkins J."/>
            <person name="Johnson-Hopson C."/>
            <person name="Khan S."/>
            <person name="Khaykin E."/>
            <person name="Kim C.J."/>
            <person name="Koo H.L."/>
            <person name="Kremenetskaia I."/>
            <person name="Kurtz D.B."/>
            <person name="Kwan A."/>
            <person name="Lam B."/>
            <person name="Langin-Hooper S."/>
            <person name="Lee A."/>
            <person name="Lee J.M."/>
            <person name="Lenz C.A."/>
            <person name="Li J.H."/>
            <person name="Li Y.-P."/>
            <person name="Lin X."/>
            <person name="Liu S.X."/>
            <person name="Liu Z.A."/>
            <person name="Luros J.S."/>
            <person name="Maiti R."/>
            <person name="Marziali A."/>
            <person name="Militscher J."/>
            <person name="Miranda M."/>
            <person name="Nguyen M."/>
            <person name="Nierman W.C."/>
            <person name="Osborne B.I."/>
            <person name="Pai G."/>
            <person name="Peterson J."/>
            <person name="Pham P.K."/>
            <person name="Rizzo M."/>
            <person name="Rooney T."/>
            <person name="Rowley D."/>
            <person name="Sakano H."/>
            <person name="Salzberg S.L."/>
            <person name="Schwartz J.R."/>
            <person name="Shinn P."/>
            <person name="Southwick A.M."/>
            <person name="Sun H."/>
            <person name="Tallon L.J."/>
            <person name="Tambunga G."/>
            <person name="Toriumi M.J."/>
            <person name="Town C.D."/>
            <person name="Utterback T."/>
            <person name="Van Aken S."/>
            <person name="Vaysberg M."/>
            <person name="Vysotskaia V.S."/>
            <person name="Walker M."/>
            <person name="Wu D."/>
            <person name="Yu G."/>
            <person name="Fraser C.M."/>
            <person name="Venter J.C."/>
            <person name="Davis R.W."/>
        </authorList>
    </citation>
    <scope>NUCLEOTIDE SEQUENCE [LARGE SCALE GENOMIC DNA]</scope>
    <source>
        <strain>cv. Columbia</strain>
    </source>
</reference>
<reference key="2">
    <citation type="journal article" date="2017" name="Plant J.">
        <title>Araport11: a complete reannotation of the Arabidopsis thaliana reference genome.</title>
        <authorList>
            <person name="Cheng C.Y."/>
            <person name="Krishnakumar V."/>
            <person name="Chan A.P."/>
            <person name="Thibaud-Nissen F."/>
            <person name="Schobel S."/>
            <person name="Town C.D."/>
        </authorList>
    </citation>
    <scope>GENOME REANNOTATION</scope>
    <source>
        <strain>cv. Columbia</strain>
    </source>
</reference>
<reference key="3">
    <citation type="journal article" date="2002" name="Science">
        <title>Functional annotation of a full-length Arabidopsis cDNA collection.</title>
        <authorList>
            <person name="Seki M."/>
            <person name="Narusaka M."/>
            <person name="Kamiya A."/>
            <person name="Ishida J."/>
            <person name="Satou M."/>
            <person name="Sakurai T."/>
            <person name="Nakajima M."/>
            <person name="Enju A."/>
            <person name="Akiyama K."/>
            <person name="Oono Y."/>
            <person name="Muramatsu M."/>
            <person name="Hayashizaki Y."/>
            <person name="Kawai J."/>
            <person name="Carninci P."/>
            <person name="Itoh M."/>
            <person name="Ishii Y."/>
            <person name="Arakawa T."/>
            <person name="Shibata K."/>
            <person name="Shinagawa A."/>
            <person name="Shinozaki K."/>
        </authorList>
    </citation>
    <scope>NUCLEOTIDE SEQUENCE [LARGE SCALE MRNA]</scope>
    <source>
        <strain>cv. Columbia</strain>
    </source>
</reference>
<reference key="4">
    <citation type="journal article" date="2003" name="Science">
        <title>Empirical analysis of transcriptional activity in the Arabidopsis genome.</title>
        <authorList>
            <person name="Yamada K."/>
            <person name="Lim J."/>
            <person name="Dale J.M."/>
            <person name="Chen H."/>
            <person name="Shinn P."/>
            <person name="Palm C.J."/>
            <person name="Southwick A.M."/>
            <person name="Wu H.C."/>
            <person name="Kim C.J."/>
            <person name="Nguyen M."/>
            <person name="Pham P.K."/>
            <person name="Cheuk R.F."/>
            <person name="Karlin-Newmann G."/>
            <person name="Liu S.X."/>
            <person name="Lam B."/>
            <person name="Sakano H."/>
            <person name="Wu T."/>
            <person name="Yu G."/>
            <person name="Miranda M."/>
            <person name="Quach H.L."/>
            <person name="Tripp M."/>
            <person name="Chang C.H."/>
            <person name="Lee J.M."/>
            <person name="Toriumi M.J."/>
            <person name="Chan M.M."/>
            <person name="Tang C.C."/>
            <person name="Onodera C.S."/>
            <person name="Deng J.M."/>
            <person name="Akiyama K."/>
            <person name="Ansari Y."/>
            <person name="Arakawa T."/>
            <person name="Banh J."/>
            <person name="Banno F."/>
            <person name="Bowser L."/>
            <person name="Brooks S.Y."/>
            <person name="Carninci P."/>
            <person name="Chao Q."/>
            <person name="Choy N."/>
            <person name="Enju A."/>
            <person name="Goldsmith A.D."/>
            <person name="Gurjal M."/>
            <person name="Hansen N.F."/>
            <person name="Hayashizaki Y."/>
            <person name="Johnson-Hopson C."/>
            <person name="Hsuan V.W."/>
            <person name="Iida K."/>
            <person name="Karnes M."/>
            <person name="Khan S."/>
            <person name="Koesema E."/>
            <person name="Ishida J."/>
            <person name="Jiang P.X."/>
            <person name="Jones T."/>
            <person name="Kawai J."/>
            <person name="Kamiya A."/>
            <person name="Meyers C."/>
            <person name="Nakajima M."/>
            <person name="Narusaka M."/>
            <person name="Seki M."/>
            <person name="Sakurai T."/>
            <person name="Satou M."/>
            <person name="Tamse R."/>
            <person name="Vaysberg M."/>
            <person name="Wallender E.K."/>
            <person name="Wong C."/>
            <person name="Yamamura Y."/>
            <person name="Yuan S."/>
            <person name="Shinozaki K."/>
            <person name="Davis R.W."/>
            <person name="Theologis A."/>
            <person name="Ecker J.R."/>
        </authorList>
    </citation>
    <scope>NUCLEOTIDE SEQUENCE [LARGE SCALE MRNA]</scope>
    <source>
        <strain>cv. Columbia</strain>
    </source>
</reference>
<reference key="5">
    <citation type="journal article" date="2008" name="FEBS Lett.">
        <title>Functional characterisation of a putative rhamnogalacturonan II specific xylosyltransferase.</title>
        <authorList>
            <person name="Egelund J."/>
            <person name="Damager I."/>
            <person name="Faber K."/>
            <person name="Olsen C.E."/>
            <person name="Ulvskov P."/>
            <person name="Petersen B.L."/>
        </authorList>
    </citation>
    <scope>FUNCTION</scope>
    <scope>BIOPHYSICOCHEMICAL PROPERTIES</scope>
    <scope>TISSUE SPECIFICITY</scope>
    <scope>GLYCOSYLATION</scope>
</reference>
<evidence type="ECO:0000250" key="1"/>
<evidence type="ECO:0000250" key="2">
    <source>
        <dbReference type="UniProtKB" id="Q9JI93"/>
    </source>
</evidence>
<evidence type="ECO:0000255" key="3"/>
<evidence type="ECO:0000269" key="4">
    <source>
    </source>
</evidence>
<evidence type="ECO:0000303" key="5">
    <source>
    </source>
</evidence>
<evidence type="ECO:0000305" key="6"/>
<dbReference type="EC" id="2.4.2.-" evidence="6"/>
<dbReference type="EMBL" id="AC009323">
    <property type="protein sequence ID" value="AAG09108.1"/>
    <property type="molecule type" value="Genomic_DNA"/>
</dbReference>
<dbReference type="EMBL" id="CP002684">
    <property type="protein sequence ID" value="AEE33406.1"/>
    <property type="molecule type" value="Genomic_DNA"/>
</dbReference>
<dbReference type="EMBL" id="AK117396">
    <property type="protein sequence ID" value="BAC42064.1"/>
    <property type="molecule type" value="mRNA"/>
</dbReference>
<dbReference type="EMBL" id="BT005111">
    <property type="protein sequence ID" value="AAO50644.1"/>
    <property type="molecule type" value="mRNA"/>
</dbReference>
<dbReference type="PIR" id="B96607">
    <property type="entry name" value="B96607"/>
</dbReference>
<dbReference type="RefSeq" id="NP_176048.1">
    <property type="nucleotide sequence ID" value="NM_104532.4"/>
</dbReference>
<dbReference type="STRING" id="3702.Q9FXA7"/>
<dbReference type="CAZy" id="GT77">
    <property type="family name" value="Glycosyltransferase Family 77"/>
</dbReference>
<dbReference type="GlyCosmos" id="Q9FXA7">
    <property type="glycosylation" value="9 sites, No reported glycans"/>
</dbReference>
<dbReference type="GlyGen" id="Q9FXA7">
    <property type="glycosylation" value="9 sites"/>
</dbReference>
<dbReference type="PaxDb" id="3702-AT1G56550.1"/>
<dbReference type="ProteomicsDB" id="236902"/>
<dbReference type="EnsemblPlants" id="AT1G56550.1">
    <property type="protein sequence ID" value="AT1G56550.1"/>
    <property type="gene ID" value="AT1G56550"/>
</dbReference>
<dbReference type="GeneID" id="842108"/>
<dbReference type="Gramene" id="AT1G56550.1">
    <property type="protein sequence ID" value="AT1G56550.1"/>
    <property type="gene ID" value="AT1G56550"/>
</dbReference>
<dbReference type="KEGG" id="ath:AT1G56550"/>
<dbReference type="Araport" id="AT1G56550"/>
<dbReference type="TAIR" id="AT1G56550">
    <property type="gene designation" value="RGXT3"/>
</dbReference>
<dbReference type="eggNOG" id="ENOG502QT5X">
    <property type="taxonomic scope" value="Eukaryota"/>
</dbReference>
<dbReference type="HOGENOM" id="CLU_051257_0_0_1"/>
<dbReference type="InParanoid" id="Q9FXA7"/>
<dbReference type="OrthoDB" id="1712432at2759"/>
<dbReference type="PhylomeDB" id="Q9FXA7"/>
<dbReference type="PRO" id="PR:Q9FXA7"/>
<dbReference type="Proteomes" id="UP000006548">
    <property type="component" value="Chromosome 1"/>
</dbReference>
<dbReference type="ExpressionAtlas" id="Q9FXA7">
    <property type="expression patterns" value="baseline and differential"/>
</dbReference>
<dbReference type="GO" id="GO:0000139">
    <property type="term" value="C:Golgi membrane"/>
    <property type="evidence" value="ECO:0007669"/>
    <property type="project" value="UniProtKB-SubCell"/>
</dbReference>
<dbReference type="GO" id="GO:0035252">
    <property type="term" value="F:UDP-xylosyltransferase activity"/>
    <property type="evidence" value="ECO:0000314"/>
    <property type="project" value="TAIR"/>
</dbReference>
<dbReference type="GO" id="GO:0071555">
    <property type="term" value="P:cell wall organization"/>
    <property type="evidence" value="ECO:0007669"/>
    <property type="project" value="UniProtKB-KW"/>
</dbReference>
<dbReference type="InterPro" id="IPR005069">
    <property type="entry name" value="Nucl-diP-sugar_transferase"/>
</dbReference>
<dbReference type="InterPro" id="IPR029044">
    <property type="entry name" value="Nucleotide-diphossugar_trans"/>
</dbReference>
<dbReference type="InterPro" id="IPR052636">
    <property type="entry name" value="UDP-D-xylose:L-fucose_XylT"/>
</dbReference>
<dbReference type="PANTHER" id="PTHR47032:SF2">
    <property type="entry name" value="UDP-D-XYLOSE:L-FUCOSE ALPHA-1,3-D-XYLOSYLTRANSFERASE 3"/>
    <property type="match status" value="1"/>
</dbReference>
<dbReference type="PANTHER" id="PTHR47032">
    <property type="entry name" value="UDP-D-XYLOSE:L-FUCOSE ALPHA-1,3-D-XYLOSYLTRANSFERASE-RELATED"/>
    <property type="match status" value="1"/>
</dbReference>
<dbReference type="Pfam" id="PF03407">
    <property type="entry name" value="Nucleotid_trans"/>
    <property type="match status" value="1"/>
</dbReference>
<dbReference type="SUPFAM" id="SSF53448">
    <property type="entry name" value="Nucleotide-diphospho-sugar transferases"/>
    <property type="match status" value="1"/>
</dbReference>
<keyword id="KW-0961">Cell wall biogenesis/degradation</keyword>
<keyword id="KW-0325">Glycoprotein</keyword>
<keyword id="KW-0328">Glycosyltransferase</keyword>
<keyword id="KW-0333">Golgi apparatus</keyword>
<keyword id="KW-0472">Membrane</keyword>
<keyword id="KW-1185">Reference proteome</keyword>
<keyword id="KW-0735">Signal-anchor</keyword>
<keyword id="KW-0808">Transferase</keyword>
<keyword id="KW-0812">Transmembrane</keyword>
<keyword id="KW-1133">Transmembrane helix</keyword>
<protein>
    <recommendedName>
        <fullName evidence="6">UDP-D-xylose:L-fucose alpha-1,3-D-xylosyltransferase 3</fullName>
        <ecNumber evidence="6">2.4.2.-</ecNumber>
    </recommendedName>
    <alternativeName>
        <fullName evidence="6">Rhamnogalacturonan xylosyltransferase 3</fullName>
    </alternativeName>
</protein>
<gene>
    <name evidence="5" type="primary">RGXT3</name>
    <name type="ordered locus">At1g56550</name>
    <name type="ORF">F25P12.100</name>
</gene>
<accession>Q9FXA7</accession>
<feature type="chain" id="PRO_0000423715" description="UDP-D-xylose:L-fucose alpha-1,3-D-xylosyltransferase 3">
    <location>
        <begin position="1"/>
        <end position="383"/>
    </location>
</feature>
<feature type="topological domain" description="Cytoplasmic" evidence="3">
    <location>
        <begin position="1"/>
        <end position="20"/>
    </location>
</feature>
<feature type="transmembrane region" description="Helical; Signal-anchor for type II membrane protein" evidence="3">
    <location>
        <begin position="21"/>
        <end position="41"/>
    </location>
</feature>
<feature type="topological domain" description="Lumenal" evidence="3">
    <location>
        <begin position="42"/>
        <end position="383"/>
    </location>
</feature>
<feature type="short sequence motif" description="DXD motif" evidence="6">
    <location>
        <begin position="180"/>
        <end position="182"/>
    </location>
</feature>
<feature type="glycosylation site" description="N-linked (GlcNAc...) asparagine" evidence="3">
    <location>
        <position position="50"/>
    </location>
</feature>
<feature type="glycosylation site" description="N-linked (GlcNAc...) asparagine" evidence="3">
    <location>
        <position position="82"/>
    </location>
</feature>
<feature type="glycosylation site" description="N-linked (GlcNAc...) asparagine" evidence="3">
    <location>
        <position position="157"/>
    </location>
</feature>
<feature type="glycosylation site" description="N-linked (GlcNAc...) asparagine" evidence="3">
    <location>
        <position position="212"/>
    </location>
</feature>
<feature type="glycosylation site" description="N-linked (GlcNAc...) asparagine" evidence="3">
    <location>
        <position position="258"/>
    </location>
</feature>
<feature type="glycosylation site" description="N-linked (GlcNAc...) asparagine" evidence="3">
    <location>
        <position position="301"/>
    </location>
</feature>
<feature type="glycosylation site" description="N-linked (GlcNAc...) asparagine" evidence="3">
    <location>
        <position position="306"/>
    </location>
</feature>
<feature type="glycosylation site" description="N-linked (GlcNAc...) asparagine" evidence="3">
    <location>
        <position position="357"/>
    </location>
</feature>
<feature type="glycosylation site" description="N-linked (GlcNAc...) asparagine" evidence="3">
    <location>
        <position position="364"/>
    </location>
</feature>
<name>RGXT3_ARATH</name>
<comment type="function">
    <text evidence="4">Catalyzes the transfer of D-xylose from UDP-alpha-D-xylose onto L-fucose. Probably involved in the biosynthesis of rhamnogalacturonan II (RG-II) through xylosylation of the internal fucose moiety of the A-chain of RG-II, a structurally complex pectic polysaccharide of the primary cell wall. RG-II is essential for the cell wall integrity of rapidly growing tissues such as roots and pollen tube growth and elongation.</text>
</comment>
<comment type="cofactor">
    <cofactor evidence="1">
        <name>Mn(2+)</name>
        <dbReference type="ChEBI" id="CHEBI:29035"/>
    </cofactor>
    <cofactor evidence="1">
        <name>Mg(2+)</name>
        <dbReference type="ChEBI" id="CHEBI:18420"/>
    </cofactor>
</comment>
<comment type="biophysicochemical properties">
    <kinetics>
        <KM evidence="4">110 uM for UDP-xylose</KM>
    </kinetics>
</comment>
<comment type="subcellular location">
    <subcellularLocation>
        <location evidence="1">Golgi apparatus membrane</location>
        <topology evidence="1">Single-pass type II membrane protein</topology>
    </subcellularLocation>
</comment>
<comment type="tissue specificity">
    <text evidence="4">Expressed around trichome support cells in the adaxial epidermis of rosette leaves, in cauline leaves, petals and both the proximal and distal ends of siliques.</text>
</comment>
<comment type="domain">
    <text evidence="2">The conserved DXD motif is involved in enzyme activity.</text>
</comment>
<comment type="PTM">
    <text evidence="4">Glycosylated.</text>
</comment>
<comment type="similarity">
    <text evidence="6">Belongs to the glycosyltransferase 77 family.</text>
</comment>
<proteinExistence type="evidence at protein level"/>